<feature type="signal peptide" evidence="1">
    <location>
        <begin position="1"/>
        <end position="22"/>
    </location>
</feature>
<feature type="peptide" id="PRO_5009115649" description="Peptide ToAP4" evidence="3">
    <location>
        <begin position="23"/>
        <end position="39"/>
    </location>
</feature>
<feature type="propeptide" id="PRO_0000454903" evidence="6">
    <location>
        <begin position="40"/>
        <end position="74"/>
    </location>
</feature>
<feature type="modified residue" description="Lysine amide" evidence="7">
    <location>
        <position position="39"/>
    </location>
</feature>
<dbReference type="EMBL" id="GEMQ01000070">
    <property type="protein sequence ID" value="JAT91119.1"/>
    <property type="molecule type" value="Transcribed_RNA"/>
</dbReference>
<dbReference type="GO" id="GO:0005576">
    <property type="term" value="C:extracellular region"/>
    <property type="evidence" value="ECO:0007669"/>
    <property type="project" value="UniProtKB-SubCell"/>
</dbReference>
<dbReference type="GO" id="GO:0002376">
    <property type="term" value="P:immune system process"/>
    <property type="evidence" value="ECO:0007669"/>
    <property type="project" value="UniProtKB-KW"/>
</dbReference>
<name>NDB44_TITOB</name>
<protein>
    <recommendedName>
        <fullName evidence="4 5">Peptide ToAP4</fullName>
    </recommendedName>
</protein>
<comment type="function">
    <text evidence="2 3 7">Shows anti-inflammatory activities, since it decreases release of pro-inflammatory cytokines, and increases release of anti-inflammatory cytokines (PubMed:31376652). Acts by blocking the Toll-like receptor 4 (TLR4) (PubMed:31376652). Also increases MHC-II expression in LPS-stimulated cells (PubMed:31376652). Does not show antibacterial activity on Mycobacterium abscessus subsp. massiliense (PubMed:31376652). Does not show antifungal activity (PubMed:27917162). Has low hemolytic activity on human erythrocyte and low monocyte cytotoxicity (PubMed:31376652). In vivo, does not induce immune cell migration (PubMed:31376652). Helical wheel projections predict an amphipathic peptide with distinct hydrophobic and hydrophilic faces (Probable).</text>
</comment>
<comment type="subcellular location">
    <subcellularLocation>
        <location evidence="7">Secreted</location>
    </subcellularLocation>
</comment>
<comment type="tissue specificity">
    <text evidence="7">Expressed by the venom gland.</text>
</comment>
<comment type="miscellaneous">
    <text evidence="6">The primary structure of the mature peptide is identical to that of Antimicrobial peptide 6 from Tityus costatus (AC Q5G8B3) and TtAP-3 from Tityus trinitatis (AC P0DRB7).</text>
</comment>
<comment type="similarity">
    <text evidence="6">Belongs to the non-disulfide-bridged peptide (NDBP) superfamily. Short antimicrobial peptide (group 4) family.</text>
</comment>
<reference evidence="8" key="1">
    <citation type="journal article" date="2018" name="PLoS ONE">
        <title>Proteomic endorsed transcriptomic profiles of venom glands from Tityus obscurus and T. serrulatus scorpions.</title>
        <authorList>
            <person name="de Oliveira U.C."/>
            <person name="Nishiyama M.Y. Jr."/>
            <person name="Dos Santos M.B.V."/>
            <person name="Santos-da-Silva A.P."/>
            <person name="Chalkidis H.M."/>
            <person name="Souza-Imberg A."/>
            <person name="Candido D.M."/>
            <person name="Yamanouye N."/>
            <person name="Dorce V.A.C."/>
            <person name="Junqueira-de-Azevedo I.L.M."/>
        </authorList>
    </citation>
    <scope>NUCLEOTIDE SEQUENCE [MRNA]</scope>
    <source>
        <tissue>Telson</tissue>
    </source>
</reference>
<reference key="2">
    <citation type="journal article" date="2016" name="Front. Microbiol.">
        <title>Activity of scorpion venom-derived antifungal peptides against planktonic cells of Candida spp. and Cryptococcus neoformans and Candida albicans biofilms.</title>
        <authorList>
            <person name="Guilhelmelli F."/>
            <person name="Vilela N."/>
            <person name="Smidt K.S."/>
            <person name="de Oliveira M.A."/>
            <person name="da Cunha Morales Alvares A."/>
            <person name="Rigonatto M.C."/>
            <person name="da Silva Costa P.H."/>
            <person name="Tavares A.H."/>
            <person name="de Freitas S.M."/>
            <person name="Nicola A.M."/>
            <person name="Franco O.L."/>
            <person name="Derengowski L.D."/>
            <person name="Schwartz E.F."/>
            <person name="Mortari M.R."/>
            <person name="Bocca A.L."/>
            <person name="Albuquerque P."/>
            <person name="Silva-Pereira I."/>
        </authorList>
    </citation>
    <scope>NUCLEOTIDE SEQUENCE [MRNA]</scope>
    <scope>SYNTHESIS OF 23-39</scope>
    <scope>PROBABLE AMIDATION AT LYS-39</scope>
    <source>
        <tissue>Venom gland</tissue>
    </source>
</reference>
<reference key="3">
    <citation type="journal article" date="2019" name="Biomed. Pharmacother.">
        <title>Peptides ToAP3 and ToAP4 decrease release of inflammatory cytokines through TLR-4 blocking.</title>
        <authorList>
            <person name="Veloso Junior P.H.H."/>
            <person name="Simon K.S."/>
            <person name="de Castro R.J.A."/>
            <person name="Coelho L.C."/>
            <person name="Erazo F.A.H."/>
            <person name="de Souza A.C.B."/>
            <person name="das Neves R.C."/>
            <person name="Lozano V.F."/>
            <person name="Schwartz E.F."/>
            <person name="Tavares A.H."/>
            <person name="Mortari M.R."/>
            <person name="Junqueira-Kipnis A.P."/>
            <person name="Silva-Pereira I."/>
            <person name="Bocca A.L."/>
        </authorList>
    </citation>
    <scope>FUNCTION</scope>
    <scope>SYNTHESIS OF 23-39</scope>
</reference>
<organism>
    <name type="scientific">Tityus obscurus</name>
    <name type="common">Amazonian scorpion</name>
    <name type="synonym">Tityus cambridgei</name>
    <dbReference type="NCBI Taxonomy" id="1221240"/>
    <lineage>
        <taxon>Eukaryota</taxon>
        <taxon>Metazoa</taxon>
        <taxon>Ecdysozoa</taxon>
        <taxon>Arthropoda</taxon>
        <taxon>Chelicerata</taxon>
        <taxon>Arachnida</taxon>
        <taxon>Scorpiones</taxon>
        <taxon>Buthida</taxon>
        <taxon>Buthoidea</taxon>
        <taxon>Buthidae</taxon>
        <taxon>Tityus</taxon>
    </lineage>
</organism>
<evidence type="ECO:0000255" key="1"/>
<evidence type="ECO:0000269" key="2">
    <source>
    </source>
</evidence>
<evidence type="ECO:0000269" key="3">
    <source>
    </source>
</evidence>
<evidence type="ECO:0000303" key="4">
    <source>
    </source>
</evidence>
<evidence type="ECO:0000303" key="5">
    <source>
    </source>
</evidence>
<evidence type="ECO:0000305" key="6"/>
<evidence type="ECO:0000305" key="7">
    <source>
    </source>
</evidence>
<evidence type="ECO:0000312" key="8">
    <source>
        <dbReference type="EMBL" id="JAT91119.1"/>
    </source>
</evidence>
<keyword id="KW-0027">Amidation</keyword>
<keyword id="KW-0391">Immunity</keyword>
<keyword id="KW-0964">Secreted</keyword>
<keyword id="KW-0732">Signal</keyword>
<proteinExistence type="evidence at protein level"/>
<sequence>MQIKHLITLFFLVLIVADQCSAFFSLIPSLIGGLVSAIKGGRRKREIAAQIEQYRDLQKREAELEELLDRLPMF</sequence>
<accession>A0A1E1WVR9</accession>